<proteinExistence type="inferred from homology"/>
<gene>
    <name evidence="1" type="primary">hslU</name>
    <name type="ordered locus">OB1550</name>
</gene>
<dbReference type="EMBL" id="BA000028">
    <property type="protein sequence ID" value="BAC13506.1"/>
    <property type="molecule type" value="Genomic_DNA"/>
</dbReference>
<dbReference type="RefSeq" id="WP_011065950.1">
    <property type="nucleotide sequence ID" value="NC_004193.1"/>
</dbReference>
<dbReference type="SMR" id="Q8CXH1"/>
<dbReference type="STRING" id="221109.gene:10733790"/>
<dbReference type="KEGG" id="oih:OB1550"/>
<dbReference type="eggNOG" id="COG1220">
    <property type="taxonomic scope" value="Bacteria"/>
</dbReference>
<dbReference type="HOGENOM" id="CLU_033123_0_0_9"/>
<dbReference type="OrthoDB" id="9804062at2"/>
<dbReference type="PhylomeDB" id="Q8CXH1"/>
<dbReference type="Proteomes" id="UP000000822">
    <property type="component" value="Chromosome"/>
</dbReference>
<dbReference type="GO" id="GO:0009376">
    <property type="term" value="C:HslUV protease complex"/>
    <property type="evidence" value="ECO:0007669"/>
    <property type="project" value="UniProtKB-UniRule"/>
</dbReference>
<dbReference type="GO" id="GO:0005524">
    <property type="term" value="F:ATP binding"/>
    <property type="evidence" value="ECO:0007669"/>
    <property type="project" value="UniProtKB-UniRule"/>
</dbReference>
<dbReference type="GO" id="GO:0016887">
    <property type="term" value="F:ATP hydrolysis activity"/>
    <property type="evidence" value="ECO:0007669"/>
    <property type="project" value="InterPro"/>
</dbReference>
<dbReference type="GO" id="GO:0008233">
    <property type="term" value="F:peptidase activity"/>
    <property type="evidence" value="ECO:0007669"/>
    <property type="project" value="InterPro"/>
</dbReference>
<dbReference type="GO" id="GO:0036402">
    <property type="term" value="F:proteasome-activating activity"/>
    <property type="evidence" value="ECO:0007669"/>
    <property type="project" value="UniProtKB-UniRule"/>
</dbReference>
<dbReference type="GO" id="GO:0043335">
    <property type="term" value="P:protein unfolding"/>
    <property type="evidence" value="ECO:0007669"/>
    <property type="project" value="UniProtKB-UniRule"/>
</dbReference>
<dbReference type="GO" id="GO:0051603">
    <property type="term" value="P:proteolysis involved in protein catabolic process"/>
    <property type="evidence" value="ECO:0007669"/>
    <property type="project" value="TreeGrafter"/>
</dbReference>
<dbReference type="CDD" id="cd19498">
    <property type="entry name" value="RecA-like_HslU"/>
    <property type="match status" value="1"/>
</dbReference>
<dbReference type="FunFam" id="3.40.50.300:FF:000220">
    <property type="entry name" value="ATP-dependent protease ATPase subunit HslU"/>
    <property type="match status" value="1"/>
</dbReference>
<dbReference type="Gene3D" id="1.10.8.60">
    <property type="match status" value="1"/>
</dbReference>
<dbReference type="Gene3D" id="3.40.50.300">
    <property type="entry name" value="P-loop containing nucleotide triphosphate hydrolases"/>
    <property type="match status" value="2"/>
</dbReference>
<dbReference type="HAMAP" id="MF_00249">
    <property type="entry name" value="HslU"/>
    <property type="match status" value="1"/>
</dbReference>
<dbReference type="InterPro" id="IPR003593">
    <property type="entry name" value="AAA+_ATPase"/>
</dbReference>
<dbReference type="InterPro" id="IPR050052">
    <property type="entry name" value="ATP-dep_Clp_protease_ClpX"/>
</dbReference>
<dbReference type="InterPro" id="IPR003959">
    <property type="entry name" value="ATPase_AAA_core"/>
</dbReference>
<dbReference type="InterPro" id="IPR019489">
    <property type="entry name" value="Clp_ATPase_C"/>
</dbReference>
<dbReference type="InterPro" id="IPR004491">
    <property type="entry name" value="HslU"/>
</dbReference>
<dbReference type="InterPro" id="IPR027417">
    <property type="entry name" value="P-loop_NTPase"/>
</dbReference>
<dbReference type="NCBIfam" id="TIGR00390">
    <property type="entry name" value="hslU"/>
    <property type="match status" value="1"/>
</dbReference>
<dbReference type="NCBIfam" id="NF003544">
    <property type="entry name" value="PRK05201.1"/>
    <property type="match status" value="1"/>
</dbReference>
<dbReference type="PANTHER" id="PTHR48102">
    <property type="entry name" value="ATP-DEPENDENT CLP PROTEASE ATP-BINDING SUBUNIT CLPX-LIKE, MITOCHONDRIAL-RELATED"/>
    <property type="match status" value="1"/>
</dbReference>
<dbReference type="PANTHER" id="PTHR48102:SF3">
    <property type="entry name" value="ATP-DEPENDENT PROTEASE ATPASE SUBUNIT HSLU"/>
    <property type="match status" value="1"/>
</dbReference>
<dbReference type="Pfam" id="PF00004">
    <property type="entry name" value="AAA"/>
    <property type="match status" value="1"/>
</dbReference>
<dbReference type="Pfam" id="PF07724">
    <property type="entry name" value="AAA_2"/>
    <property type="match status" value="1"/>
</dbReference>
<dbReference type="Pfam" id="PF10431">
    <property type="entry name" value="ClpB_D2-small"/>
    <property type="match status" value="1"/>
</dbReference>
<dbReference type="SMART" id="SM00382">
    <property type="entry name" value="AAA"/>
    <property type="match status" value="1"/>
</dbReference>
<dbReference type="SMART" id="SM01086">
    <property type="entry name" value="ClpB_D2-small"/>
    <property type="match status" value="1"/>
</dbReference>
<dbReference type="SUPFAM" id="SSF52540">
    <property type="entry name" value="P-loop containing nucleoside triphosphate hydrolases"/>
    <property type="match status" value="1"/>
</dbReference>
<sequence>MGMDYTPRQIVEQLDQFIVGQKQAKKSVAVALRNRYRRMKLDEGFRDEIVPKNILMIGPTGVGKTEIARRLAKLVGAPFIKVEATKFTEVGYVGRDVESMVRDLVEMAVRMVKEEKMAGVMNEAEEEANKRLVKLLVPESKKKPAMKNPFEMLFQSDGSDGDDETTEQDSHDEIRSKRKRIAHQLALGELEDHIVSVEIDEVPPSMFDMLQGSGMEQMGMNMQDAFGQFMPKKKKKRNLPVSEARKVLTQQEAQKLVDMDEVAQEATSRAEGSGIIFIDEIDKVAGKQENAANVSREGVQRDILPIVEGSTVVTKHGTVKTDHMLFVAAGAFHMSKPSDLIPELQGRFPIRVELEKLTVEDFKRILTEPSNALIKQYQLMLQTEGINVEFTDEAIERLAEIAYQVNQNTDNIGARRLHTILEKLLEDLSYEAPEITMEKVEITVGYVDDKLSSIVQDKDLSQFIL</sequence>
<protein>
    <recommendedName>
        <fullName evidence="1">ATP-dependent protease ATPase subunit HslU</fullName>
    </recommendedName>
    <alternativeName>
        <fullName evidence="1">Unfoldase HslU</fullName>
    </alternativeName>
</protein>
<name>HSLU_OCEIH</name>
<organism>
    <name type="scientific">Oceanobacillus iheyensis (strain DSM 14371 / CIP 107618 / JCM 11309 / KCTC 3954 / HTE831)</name>
    <dbReference type="NCBI Taxonomy" id="221109"/>
    <lineage>
        <taxon>Bacteria</taxon>
        <taxon>Bacillati</taxon>
        <taxon>Bacillota</taxon>
        <taxon>Bacilli</taxon>
        <taxon>Bacillales</taxon>
        <taxon>Bacillaceae</taxon>
        <taxon>Oceanobacillus</taxon>
    </lineage>
</organism>
<comment type="function">
    <text evidence="1">ATPase subunit of a proteasome-like degradation complex; this subunit has chaperone activity. The binding of ATP and its subsequent hydrolysis by HslU are essential for unfolding of protein substrates subsequently hydrolyzed by HslV. HslU recognizes the N-terminal part of its protein substrates and unfolds these before they are guided to HslV for hydrolysis.</text>
</comment>
<comment type="subunit">
    <text evidence="1">A double ring-shaped homohexamer of HslV is capped on each side by a ring-shaped HslU homohexamer. The assembly of the HslU/HslV complex is dependent on binding of ATP.</text>
</comment>
<comment type="subcellular location">
    <subcellularLocation>
        <location evidence="1">Cytoplasm</location>
    </subcellularLocation>
</comment>
<comment type="similarity">
    <text evidence="1">Belongs to the ClpX chaperone family. HslU subfamily.</text>
</comment>
<keyword id="KW-0067">ATP-binding</keyword>
<keyword id="KW-0143">Chaperone</keyword>
<keyword id="KW-0963">Cytoplasm</keyword>
<keyword id="KW-0547">Nucleotide-binding</keyword>
<keyword id="KW-1185">Reference proteome</keyword>
<reference key="1">
    <citation type="journal article" date="2002" name="Nucleic Acids Res.">
        <title>Genome sequence of Oceanobacillus iheyensis isolated from the Iheya Ridge and its unexpected adaptive capabilities to extreme environments.</title>
        <authorList>
            <person name="Takami H."/>
            <person name="Takaki Y."/>
            <person name="Uchiyama I."/>
        </authorList>
    </citation>
    <scope>NUCLEOTIDE SEQUENCE [LARGE SCALE GENOMIC DNA]</scope>
    <source>
        <strain>DSM 14371 / CIP 107618 / JCM 11309 / KCTC 3954 / HTE831</strain>
    </source>
</reference>
<evidence type="ECO:0000255" key="1">
    <source>
        <dbReference type="HAMAP-Rule" id="MF_00249"/>
    </source>
</evidence>
<evidence type="ECO:0000256" key="2">
    <source>
        <dbReference type="SAM" id="MobiDB-lite"/>
    </source>
</evidence>
<feature type="chain" id="PRO_0000160526" description="ATP-dependent protease ATPase subunit HslU">
    <location>
        <begin position="1"/>
        <end position="465"/>
    </location>
</feature>
<feature type="region of interest" description="Disordered" evidence="2">
    <location>
        <begin position="153"/>
        <end position="175"/>
    </location>
</feature>
<feature type="binding site" evidence="1">
    <location>
        <position position="19"/>
    </location>
    <ligand>
        <name>ATP</name>
        <dbReference type="ChEBI" id="CHEBI:30616"/>
    </ligand>
</feature>
<feature type="binding site" evidence="1">
    <location>
        <begin position="61"/>
        <end position="66"/>
    </location>
    <ligand>
        <name>ATP</name>
        <dbReference type="ChEBI" id="CHEBI:30616"/>
    </ligand>
</feature>
<feature type="binding site" evidence="1">
    <location>
        <position position="279"/>
    </location>
    <ligand>
        <name>ATP</name>
        <dbReference type="ChEBI" id="CHEBI:30616"/>
    </ligand>
</feature>
<feature type="binding site" evidence="1">
    <location>
        <position position="343"/>
    </location>
    <ligand>
        <name>ATP</name>
        <dbReference type="ChEBI" id="CHEBI:30616"/>
    </ligand>
</feature>
<feature type="binding site" evidence="1">
    <location>
        <position position="415"/>
    </location>
    <ligand>
        <name>ATP</name>
        <dbReference type="ChEBI" id="CHEBI:30616"/>
    </ligand>
</feature>
<accession>Q8CXH1</accession>